<comment type="function">
    <text evidence="1">Catalyzes the transfer of the L-Ara4N moiety of the glycolipid undecaprenyl phosphate-alpha-L-Ara4N to lipid A. The modified arabinose is attached to lipid A and is required for resistance to polymyxin and cationic antimicrobial peptides.</text>
</comment>
<comment type="catalytic activity">
    <reaction evidence="1">
        <text>4-amino-4-deoxy-alpha-L-arabinopyranosyl di-trans,octa-cis-undecaprenyl phosphate + lipid IVA = lipid IIA + di-trans,octa-cis-undecaprenyl phosphate.</text>
        <dbReference type="EC" id="2.4.2.43"/>
    </reaction>
</comment>
<comment type="pathway">
    <text evidence="1">Lipopolysaccharide metabolism; 4-amino-4-deoxy-beta-L-arabinose-lipid A biosynthesis.</text>
</comment>
<comment type="subcellular location">
    <subcellularLocation>
        <location evidence="1">Cell inner membrane</location>
        <topology evidence="1">Multi-pass membrane protein</topology>
    </subcellularLocation>
</comment>
<comment type="similarity">
    <text evidence="1">Belongs to the glycosyltransferase 83 family.</text>
</comment>
<sequence>MEKSMIKLKSTVIVVLFALLYLLPLNGRWLWSPDETRYAEISREMLQRGDWIVPHLLDIRYFEKPVAGYWLNNMSQWLLGHTNFSVRFASVFSTALSALLVFWLAMMLWKNQRTALLAATIYLTSLLVYGIGTYSVLDPMVTLWMTAALFSHAMILRAKLTRERLLAWGLMGLACGMGFMTKGFLALALPVISVLPVALAQKRIKELLLFGPLAIVVAVLLSAPWALAVHAREADYWHYFFWIEHIQRFAEDDAQHKAPFWYYLPFLIVGTFPWLALLPGALRSGWTERKVNPERFFLLCWMVMPLLFFSIAKGKLLTYILPCFAPLALLMAAWISGLAPVVRERLLRINSWLNIVFGGVLGLAVAALGLGIIVPHFYQPGEGLTIISGIVCFIGWIAFAAVSLRKQQTWGYLVAGCPLFLALLVGGSIPASVVDSKNPQTFIRSHQPLLEDSRYVLSDEVGLAAGLAWELKRSDITLFKARGELNYGLDYADAADRFVDEGAFPAWLADKRRSGNVALVLKTDRDSDDEYRNLPAPNQLRKSHRYVLLFYKQVVP</sequence>
<proteinExistence type="inferred from homology"/>
<organism>
    <name type="scientific">Pectobacterium atrosepticum (strain SCRI 1043 / ATCC BAA-672)</name>
    <name type="common">Erwinia carotovora subsp. atroseptica</name>
    <dbReference type="NCBI Taxonomy" id="218491"/>
    <lineage>
        <taxon>Bacteria</taxon>
        <taxon>Pseudomonadati</taxon>
        <taxon>Pseudomonadota</taxon>
        <taxon>Gammaproteobacteria</taxon>
        <taxon>Enterobacterales</taxon>
        <taxon>Pectobacteriaceae</taxon>
        <taxon>Pectobacterium</taxon>
    </lineage>
</organism>
<keyword id="KW-0997">Cell inner membrane</keyword>
<keyword id="KW-1003">Cell membrane</keyword>
<keyword id="KW-0328">Glycosyltransferase</keyword>
<keyword id="KW-0441">Lipid A biosynthesis</keyword>
<keyword id="KW-0444">Lipid biosynthesis</keyword>
<keyword id="KW-0443">Lipid metabolism</keyword>
<keyword id="KW-0448">Lipopolysaccharide biosynthesis</keyword>
<keyword id="KW-0472">Membrane</keyword>
<keyword id="KW-1185">Reference proteome</keyword>
<keyword id="KW-0808">Transferase</keyword>
<keyword id="KW-0812">Transmembrane</keyword>
<keyword id="KW-1133">Transmembrane helix</keyword>
<feature type="chain" id="PRO_0000121507" description="Undecaprenyl phosphate-alpha-4-amino-4-deoxy-L-arabinose arabinosyl transferase">
    <location>
        <begin position="1"/>
        <end position="556"/>
    </location>
</feature>
<feature type="transmembrane region" description="Helical" evidence="1">
    <location>
        <begin position="88"/>
        <end position="108"/>
    </location>
</feature>
<feature type="transmembrane region" description="Helical" evidence="1">
    <location>
        <begin position="116"/>
        <end position="136"/>
    </location>
</feature>
<feature type="transmembrane region" description="Helical" evidence="1">
    <location>
        <begin position="179"/>
        <end position="199"/>
    </location>
</feature>
<feature type="transmembrane region" description="Helical" evidence="1">
    <location>
        <begin position="207"/>
        <end position="227"/>
    </location>
</feature>
<feature type="transmembrane region" description="Helical" evidence="1">
    <location>
        <begin position="258"/>
        <end position="278"/>
    </location>
</feature>
<feature type="transmembrane region" description="Helical" evidence="1">
    <location>
        <begin position="296"/>
        <end position="316"/>
    </location>
</feature>
<feature type="transmembrane region" description="Helical" evidence="1">
    <location>
        <begin position="319"/>
        <end position="339"/>
    </location>
</feature>
<feature type="transmembrane region" description="Helical" evidence="1">
    <location>
        <begin position="355"/>
        <end position="375"/>
    </location>
</feature>
<feature type="transmembrane region" description="Helical" evidence="1">
    <location>
        <begin position="384"/>
        <end position="404"/>
    </location>
</feature>
<feature type="transmembrane region" description="Helical" evidence="1">
    <location>
        <begin position="410"/>
        <end position="430"/>
    </location>
</feature>
<gene>
    <name evidence="1" type="primary">arnT</name>
    <name type="ordered locus">ECA3142</name>
</gene>
<name>ARNT_PECAS</name>
<accession>Q6D2F3</accession>
<dbReference type="EC" id="2.4.2.43" evidence="1"/>
<dbReference type="EMBL" id="BX950851">
    <property type="protein sequence ID" value="CAG76041.1"/>
    <property type="molecule type" value="Genomic_DNA"/>
</dbReference>
<dbReference type="RefSeq" id="WP_011094665.1">
    <property type="nucleotide sequence ID" value="NC_004547.2"/>
</dbReference>
<dbReference type="SMR" id="Q6D2F3"/>
<dbReference type="STRING" id="218491.ECA3142"/>
<dbReference type="CAZy" id="GT83">
    <property type="family name" value="Glycosyltransferase Family 83"/>
</dbReference>
<dbReference type="GeneID" id="57209827"/>
<dbReference type="KEGG" id="eca:ECA3142"/>
<dbReference type="PATRIC" id="fig|218491.5.peg.3179"/>
<dbReference type="eggNOG" id="COG1807">
    <property type="taxonomic scope" value="Bacteria"/>
</dbReference>
<dbReference type="HOGENOM" id="CLU_019200_2_1_6"/>
<dbReference type="OrthoDB" id="9775035at2"/>
<dbReference type="UniPathway" id="UPA00037"/>
<dbReference type="Proteomes" id="UP000007966">
    <property type="component" value="Chromosome"/>
</dbReference>
<dbReference type="GO" id="GO:0005886">
    <property type="term" value="C:plasma membrane"/>
    <property type="evidence" value="ECO:0007669"/>
    <property type="project" value="UniProtKB-SubCell"/>
</dbReference>
<dbReference type="GO" id="GO:0103015">
    <property type="term" value="F:4-amino-4-deoxy-L-arabinose transferase activity"/>
    <property type="evidence" value="ECO:0007669"/>
    <property type="project" value="UniProtKB-EC"/>
</dbReference>
<dbReference type="GO" id="GO:0000030">
    <property type="term" value="F:mannosyltransferase activity"/>
    <property type="evidence" value="ECO:0007669"/>
    <property type="project" value="InterPro"/>
</dbReference>
<dbReference type="GO" id="GO:0009245">
    <property type="term" value="P:lipid A biosynthetic process"/>
    <property type="evidence" value="ECO:0007669"/>
    <property type="project" value="UniProtKB-UniRule"/>
</dbReference>
<dbReference type="GO" id="GO:0009103">
    <property type="term" value="P:lipopolysaccharide biosynthetic process"/>
    <property type="evidence" value="ECO:0007669"/>
    <property type="project" value="UniProtKB-KW"/>
</dbReference>
<dbReference type="GO" id="GO:0006493">
    <property type="term" value="P:protein O-linked glycosylation"/>
    <property type="evidence" value="ECO:0007669"/>
    <property type="project" value="InterPro"/>
</dbReference>
<dbReference type="GO" id="GO:0010041">
    <property type="term" value="P:response to iron(III) ion"/>
    <property type="evidence" value="ECO:0007669"/>
    <property type="project" value="TreeGrafter"/>
</dbReference>
<dbReference type="HAMAP" id="MF_01165">
    <property type="entry name" value="ArnT_transfer"/>
    <property type="match status" value="1"/>
</dbReference>
<dbReference type="InterPro" id="IPR022839">
    <property type="entry name" value="ArnT_tfrase"/>
</dbReference>
<dbReference type="InterPro" id="IPR003342">
    <property type="entry name" value="Glyco_trans_39/83"/>
</dbReference>
<dbReference type="InterPro" id="IPR050297">
    <property type="entry name" value="LipidA_mod_glycosyltrf_83"/>
</dbReference>
<dbReference type="NCBIfam" id="NF009784">
    <property type="entry name" value="PRK13279.1"/>
    <property type="match status" value="1"/>
</dbReference>
<dbReference type="PANTHER" id="PTHR33908">
    <property type="entry name" value="MANNOSYLTRANSFERASE YKCB-RELATED"/>
    <property type="match status" value="1"/>
</dbReference>
<dbReference type="PANTHER" id="PTHR33908:SF3">
    <property type="entry name" value="UNDECAPRENYL PHOSPHATE-ALPHA-4-AMINO-4-DEOXY-L-ARABINOSE ARABINOSYL TRANSFERASE"/>
    <property type="match status" value="1"/>
</dbReference>
<dbReference type="Pfam" id="PF02366">
    <property type="entry name" value="PMT"/>
    <property type="match status" value="1"/>
</dbReference>
<reference key="1">
    <citation type="journal article" date="2004" name="Proc. Natl. Acad. Sci. U.S.A.">
        <title>Genome sequence of the enterobacterial phytopathogen Erwinia carotovora subsp. atroseptica and characterization of virulence factors.</title>
        <authorList>
            <person name="Bell K.S."/>
            <person name="Sebaihia M."/>
            <person name="Pritchard L."/>
            <person name="Holden M.T.G."/>
            <person name="Hyman L.J."/>
            <person name="Holeva M.C."/>
            <person name="Thomson N.R."/>
            <person name="Bentley S.D."/>
            <person name="Churcher L.J.C."/>
            <person name="Mungall K."/>
            <person name="Atkin R."/>
            <person name="Bason N."/>
            <person name="Brooks K."/>
            <person name="Chillingworth T."/>
            <person name="Clark K."/>
            <person name="Doggett J."/>
            <person name="Fraser A."/>
            <person name="Hance Z."/>
            <person name="Hauser H."/>
            <person name="Jagels K."/>
            <person name="Moule S."/>
            <person name="Norbertczak H."/>
            <person name="Ormond D."/>
            <person name="Price C."/>
            <person name="Quail M.A."/>
            <person name="Sanders M."/>
            <person name="Walker D."/>
            <person name="Whitehead S."/>
            <person name="Salmond G.P.C."/>
            <person name="Birch P.R.J."/>
            <person name="Parkhill J."/>
            <person name="Toth I.K."/>
        </authorList>
    </citation>
    <scope>NUCLEOTIDE SEQUENCE [LARGE SCALE GENOMIC DNA]</scope>
    <source>
        <strain>SCRI 1043 / ATCC BAA-672</strain>
    </source>
</reference>
<evidence type="ECO:0000255" key="1">
    <source>
        <dbReference type="HAMAP-Rule" id="MF_01165"/>
    </source>
</evidence>
<protein>
    <recommendedName>
        <fullName evidence="1">Undecaprenyl phosphate-alpha-4-amino-4-deoxy-L-arabinose arabinosyl transferase</fullName>
        <ecNumber evidence="1">2.4.2.43</ecNumber>
    </recommendedName>
    <alternativeName>
        <fullName evidence="1">4-amino-4-deoxy-L-arabinose lipid A transferase</fullName>
    </alternativeName>
    <alternativeName>
        <fullName evidence="1">Lipid IV(A) 4-amino-4-deoxy-L-arabinosyltransferase</fullName>
    </alternativeName>
    <alternativeName>
        <fullName evidence="1">Undecaprenyl phosphate-alpha-L-Ara4N transferase</fullName>
    </alternativeName>
</protein>